<reference key="1">
    <citation type="journal article" date="2014" name="Stand. Genomic Sci.">
        <title>Complete genome sequence of Anabaena variabilis ATCC 29413.</title>
        <authorList>
            <person name="Thiel T."/>
            <person name="Pratte B.S."/>
            <person name="Zhong J."/>
            <person name="Goodwin L."/>
            <person name="Copeland A."/>
            <person name="Lucas S."/>
            <person name="Han C."/>
            <person name="Pitluck S."/>
            <person name="Land M.L."/>
            <person name="Kyrpides N.C."/>
            <person name="Woyke T."/>
        </authorList>
    </citation>
    <scope>NUCLEOTIDE SEQUENCE [LARGE SCALE GENOMIC DNA]</scope>
    <source>
        <strain>ATCC 29413 / PCC 7937</strain>
    </source>
</reference>
<protein>
    <recommendedName>
        <fullName evidence="1">UPF0235 protein Ava_3894</fullName>
    </recommendedName>
</protein>
<gene>
    <name type="ordered locus">Ava_3894</name>
</gene>
<comment type="similarity">
    <text evidence="1">Belongs to the UPF0235 family.</text>
</comment>
<accession>Q3M687</accession>
<name>Y3894_TRIV2</name>
<evidence type="ECO:0000255" key="1">
    <source>
        <dbReference type="HAMAP-Rule" id="MF_00634"/>
    </source>
</evidence>
<evidence type="ECO:0000256" key="2">
    <source>
        <dbReference type="SAM" id="MobiDB-lite"/>
    </source>
</evidence>
<dbReference type="EMBL" id="CP000117">
    <property type="protein sequence ID" value="ABA23499.1"/>
    <property type="molecule type" value="Genomic_DNA"/>
</dbReference>
<dbReference type="SMR" id="Q3M687"/>
<dbReference type="STRING" id="240292.Ava_3894"/>
<dbReference type="KEGG" id="ava:Ava_3894"/>
<dbReference type="eggNOG" id="COG1872">
    <property type="taxonomic scope" value="Bacteria"/>
</dbReference>
<dbReference type="HOGENOM" id="CLU_130694_5_3_3"/>
<dbReference type="Proteomes" id="UP000002533">
    <property type="component" value="Chromosome"/>
</dbReference>
<dbReference type="GO" id="GO:0005737">
    <property type="term" value="C:cytoplasm"/>
    <property type="evidence" value="ECO:0007669"/>
    <property type="project" value="TreeGrafter"/>
</dbReference>
<dbReference type="Gene3D" id="3.30.1200.10">
    <property type="entry name" value="YggU-like"/>
    <property type="match status" value="1"/>
</dbReference>
<dbReference type="HAMAP" id="MF_00634">
    <property type="entry name" value="UPF0235"/>
    <property type="match status" value="1"/>
</dbReference>
<dbReference type="InterPro" id="IPR003746">
    <property type="entry name" value="DUF167"/>
</dbReference>
<dbReference type="InterPro" id="IPR036591">
    <property type="entry name" value="YggU-like_sf"/>
</dbReference>
<dbReference type="NCBIfam" id="TIGR00251">
    <property type="entry name" value="DUF167 family protein"/>
    <property type="match status" value="1"/>
</dbReference>
<dbReference type="PANTHER" id="PTHR13420">
    <property type="entry name" value="UPF0235 PROTEIN C15ORF40"/>
    <property type="match status" value="1"/>
</dbReference>
<dbReference type="PANTHER" id="PTHR13420:SF7">
    <property type="entry name" value="UPF0235 PROTEIN C15ORF40"/>
    <property type="match status" value="1"/>
</dbReference>
<dbReference type="Pfam" id="PF02594">
    <property type="entry name" value="DUF167"/>
    <property type="match status" value="1"/>
</dbReference>
<dbReference type="SMART" id="SM01152">
    <property type="entry name" value="DUF167"/>
    <property type="match status" value="1"/>
</dbReference>
<dbReference type="SUPFAM" id="SSF69786">
    <property type="entry name" value="YggU-like"/>
    <property type="match status" value="1"/>
</dbReference>
<organism>
    <name type="scientific">Trichormus variabilis (strain ATCC 29413 / PCC 7937)</name>
    <name type="common">Anabaena variabilis</name>
    <dbReference type="NCBI Taxonomy" id="240292"/>
    <lineage>
        <taxon>Bacteria</taxon>
        <taxon>Bacillati</taxon>
        <taxon>Cyanobacteriota</taxon>
        <taxon>Cyanophyceae</taxon>
        <taxon>Nostocales</taxon>
        <taxon>Nostocaceae</taxon>
        <taxon>Trichormus</taxon>
    </lineage>
</organism>
<proteinExistence type="inferred from homology"/>
<feature type="chain" id="PRO_1000056758" description="UPF0235 protein Ava_3894">
    <location>
        <begin position="1"/>
        <end position="75"/>
    </location>
</feature>
<feature type="region of interest" description="Disordered" evidence="2">
    <location>
        <begin position="1"/>
        <end position="32"/>
    </location>
</feature>
<sequence length="75" mass="8320">MQKKVKVKPNSKQQKIAEQDDGSLTVHLKSPPVDGKANEELIKLLAEKFAVPKSHITIKSGLSSRQKLIEIDTDI</sequence>